<reference key="1">
    <citation type="journal article" date="2007" name="PLoS ONE">
        <title>Complete genomic characterization of a pathogenic A.II strain of Francisella tularensis subspecies tularensis.</title>
        <authorList>
            <person name="Beckstrom-Sternberg S.M."/>
            <person name="Auerbach R.K."/>
            <person name="Godbole S."/>
            <person name="Pearson J.V."/>
            <person name="Beckstrom-Sternberg J.S."/>
            <person name="Deng Z."/>
            <person name="Munk C."/>
            <person name="Kubota K."/>
            <person name="Zhou Y."/>
            <person name="Bruce D."/>
            <person name="Noronha J."/>
            <person name="Scheuermann R.H."/>
            <person name="Wang A."/>
            <person name="Wei X."/>
            <person name="Wang J."/>
            <person name="Hao J."/>
            <person name="Wagner D.M."/>
            <person name="Brettin T.S."/>
            <person name="Brown N."/>
            <person name="Gilna P."/>
            <person name="Keim P.S."/>
        </authorList>
    </citation>
    <scope>NUCLEOTIDE SEQUENCE [LARGE SCALE GENOMIC DNA]</scope>
    <source>
        <strain>WY96-3418</strain>
    </source>
</reference>
<accession>A4IY88</accession>
<comment type="subcellular location">
    <subcellularLocation>
        <location evidence="1">Cytoplasm</location>
    </subcellularLocation>
</comment>
<comment type="similarity">
    <text evidence="1">Belongs to the TACO1 family.</text>
</comment>
<sequence length="248" mass="26843">MAGHSKWANIKHKKAKEDAKRGKIFTKLIREITVAARLGGGDKDANPRLRAAIATALANNMSKDTIERAVVKGAGGDESANVEEVRYEGYGPGGVAIIVDCMTDNRNRTVGEVRHTFTKSGGNLGTDGSVAYMFTKRGIISFAPGVDEDALMEVALEAGAEDIITHEDGSIDVYTDPHDFSDIQEVLIEKGFNSENAEVTFDAETKAELDTETAEKVMALIDKLEDLDDVQSVYSNANFTQELIEQIG</sequence>
<dbReference type="EMBL" id="CP000608">
    <property type="protein sequence ID" value="ABO46889.1"/>
    <property type="molecule type" value="Genomic_DNA"/>
</dbReference>
<dbReference type="RefSeq" id="WP_003026247.1">
    <property type="nucleotide sequence ID" value="NC_009257.1"/>
</dbReference>
<dbReference type="SMR" id="A4IY88"/>
<dbReference type="KEGG" id="ftw:FTW_1073"/>
<dbReference type="HOGENOM" id="CLU_062974_2_2_6"/>
<dbReference type="GO" id="GO:0005829">
    <property type="term" value="C:cytosol"/>
    <property type="evidence" value="ECO:0007669"/>
    <property type="project" value="TreeGrafter"/>
</dbReference>
<dbReference type="GO" id="GO:0003677">
    <property type="term" value="F:DNA binding"/>
    <property type="evidence" value="ECO:0007669"/>
    <property type="project" value="UniProtKB-UniRule"/>
</dbReference>
<dbReference type="GO" id="GO:0006355">
    <property type="term" value="P:regulation of DNA-templated transcription"/>
    <property type="evidence" value="ECO:0007669"/>
    <property type="project" value="UniProtKB-UniRule"/>
</dbReference>
<dbReference type="FunFam" id="1.10.10.200:FF:000001">
    <property type="entry name" value="Probable transcriptional regulatory protein YebC"/>
    <property type="match status" value="1"/>
</dbReference>
<dbReference type="FunFam" id="3.30.70.980:FF:000002">
    <property type="entry name" value="Probable transcriptional regulatory protein YebC"/>
    <property type="match status" value="1"/>
</dbReference>
<dbReference type="Gene3D" id="1.10.10.200">
    <property type="match status" value="1"/>
</dbReference>
<dbReference type="Gene3D" id="3.30.70.980">
    <property type="match status" value="2"/>
</dbReference>
<dbReference type="HAMAP" id="MF_00693">
    <property type="entry name" value="Transcrip_reg_TACO1"/>
    <property type="match status" value="1"/>
</dbReference>
<dbReference type="InterPro" id="IPR017856">
    <property type="entry name" value="Integrase-like_N"/>
</dbReference>
<dbReference type="InterPro" id="IPR048300">
    <property type="entry name" value="TACO1_YebC-like_2nd/3rd_dom"/>
</dbReference>
<dbReference type="InterPro" id="IPR049083">
    <property type="entry name" value="TACO1_YebC_N"/>
</dbReference>
<dbReference type="InterPro" id="IPR002876">
    <property type="entry name" value="Transcrip_reg_TACO1-like"/>
</dbReference>
<dbReference type="InterPro" id="IPR026564">
    <property type="entry name" value="Transcrip_reg_TACO1-like_dom3"/>
</dbReference>
<dbReference type="InterPro" id="IPR029072">
    <property type="entry name" value="YebC-like"/>
</dbReference>
<dbReference type="NCBIfam" id="NF001030">
    <property type="entry name" value="PRK00110.1"/>
    <property type="match status" value="1"/>
</dbReference>
<dbReference type="NCBIfam" id="NF009044">
    <property type="entry name" value="PRK12378.1"/>
    <property type="match status" value="1"/>
</dbReference>
<dbReference type="NCBIfam" id="TIGR01033">
    <property type="entry name" value="YebC/PmpR family DNA-binding transcriptional regulator"/>
    <property type="match status" value="1"/>
</dbReference>
<dbReference type="PANTHER" id="PTHR12532:SF6">
    <property type="entry name" value="TRANSCRIPTIONAL REGULATORY PROTEIN YEBC-RELATED"/>
    <property type="match status" value="1"/>
</dbReference>
<dbReference type="PANTHER" id="PTHR12532">
    <property type="entry name" value="TRANSLATIONAL ACTIVATOR OF CYTOCHROME C OXIDASE 1"/>
    <property type="match status" value="1"/>
</dbReference>
<dbReference type="Pfam" id="PF20772">
    <property type="entry name" value="TACO1_YebC_N"/>
    <property type="match status" value="1"/>
</dbReference>
<dbReference type="Pfam" id="PF01709">
    <property type="entry name" value="Transcrip_reg"/>
    <property type="match status" value="1"/>
</dbReference>
<dbReference type="SUPFAM" id="SSF75625">
    <property type="entry name" value="YebC-like"/>
    <property type="match status" value="1"/>
</dbReference>
<evidence type="ECO:0000255" key="1">
    <source>
        <dbReference type="HAMAP-Rule" id="MF_00693"/>
    </source>
</evidence>
<name>Y1073_FRATW</name>
<keyword id="KW-0963">Cytoplasm</keyword>
<keyword id="KW-0238">DNA-binding</keyword>
<keyword id="KW-0804">Transcription</keyword>
<keyword id="KW-0805">Transcription regulation</keyword>
<proteinExistence type="inferred from homology"/>
<gene>
    <name type="ordered locus">FTW_1073</name>
</gene>
<organism>
    <name type="scientific">Francisella tularensis subsp. tularensis (strain WY96-3418)</name>
    <dbReference type="NCBI Taxonomy" id="418136"/>
    <lineage>
        <taxon>Bacteria</taxon>
        <taxon>Pseudomonadati</taxon>
        <taxon>Pseudomonadota</taxon>
        <taxon>Gammaproteobacteria</taxon>
        <taxon>Thiotrichales</taxon>
        <taxon>Francisellaceae</taxon>
        <taxon>Francisella</taxon>
    </lineage>
</organism>
<feature type="chain" id="PRO_1000045312" description="Probable transcriptional regulatory protein FTW_1073">
    <location>
        <begin position="1"/>
        <end position="248"/>
    </location>
</feature>
<protein>
    <recommendedName>
        <fullName evidence="1">Probable transcriptional regulatory protein FTW_1073</fullName>
    </recommendedName>
</protein>